<evidence type="ECO:0000255" key="1">
    <source>
        <dbReference type="HAMAP-Rule" id="MF_04091"/>
    </source>
</evidence>
<organismHost>
    <name type="scientific">Sus scrofa</name>
    <name type="common">Pig</name>
    <dbReference type="NCBI Taxonomy" id="9823"/>
</organismHost>
<comment type="function">
    <text evidence="1">Plays an essential role in the virus replication cycle by acting as a viroporin. Creates a pore in the host endoplasmic reticulum and as a consequence releases Ca(2+) in the cytoplasm of infected cell. In turn, high levels of cytoplasmic calcium trigger membrane trafficking and transport of viral ER-associated proteins to viroplasms, sites of viral genome replication and immature particle assembly.</text>
</comment>
<comment type="function">
    <text evidence="1">The secreted form acts as an enterotoxin that causes phospholipase C-dependent elevation of the intracellular calcium concentration in host intestinal mucosa cells. Increased concentration of intracellular calcium disrupts the cytoskeleton and the tight junctions, raising the paracellular permeability. Potentiates chloride ion secretion through a calcium ion-dependent signaling pathway, inducing age-dependent diarrhea. To perform this enterotoxigenic role in vivo, NSP4 is released from infected enterocytes in a soluble form capable of diffusing within the intestinal lumen and interacting with host plasma membrane receptors on neighboring epithelial cells such as integrins ITGA1/ITGB1 and ITGA2/ITGB1.</text>
</comment>
<comment type="subunit">
    <text evidence="1">Homotetramer. Interacts with the immature particle in the viroplasm. Interacts with host CAV1, early and late in infection. Interacts with host integrin ITGA1/ITGB1 heterodimer. Interacts with host integrin ITGA2/ITGB1 heterodimer. Interaction with microtubules blocks trafficking to the Golgi apparatus.</text>
</comment>
<comment type="subcellular location">
    <subcellularLocation>
        <location evidence="1">Host rough endoplasmic reticulum membrane</location>
        <topology evidence="1">Single-pass type III membrane protein</topology>
    </subcellularLocation>
    <subcellularLocation>
        <location evidence="1">Host membrane</location>
        <location evidence="1">Host caveola</location>
        <topology evidence="1">Single-pass type III membrane protein</topology>
    </subcellularLocation>
    <subcellularLocation>
        <location evidence="1">Secreted</location>
    </subcellularLocation>
    <text evidence="1">NSP4 also localizes in vesicular structures which contain autophagosomal markers and associate with viroplasms in virus-infected cells. Additionally, a soluble form of glycosylated NSP4 is secreted despite retention of its transmembrane domain.</text>
</comment>
<comment type="domain">
    <text evidence="1">Binds 1 calcium ion per tetramer.</text>
</comment>
<comment type="PTM">
    <text evidence="1">The N-glycosyl content is primarily Man(9)GlcNAc, with a small amount of Man(8)GlcNAc.</text>
</comment>
<comment type="similarity">
    <text evidence="1">Belongs to the rotavirus NSP4 family.</text>
</comment>
<reference key="1">
    <citation type="journal article" date="1997" name="J. Gen. Virol.">
        <title>Three major alleles of rotavirus NSP4 proteins identified by sequence analysis.</title>
        <authorList>
            <person name="Horie Y."/>
            <person name="Masamune O."/>
            <person name="Nakagomi O."/>
        </authorList>
    </citation>
    <scope>NUCLEOTIDE SEQUENCE [MRNA]</scope>
</reference>
<reference key="2">
    <citation type="journal article" date="2008" name="Proc. Natl. Acad. Sci. U.S.A.">
        <title>Inaugural article: integrins alpha1beta1 and alpha2beta1 are receptors for the rotavirus enterotoxin.</title>
        <authorList>
            <person name="Seo N.-S."/>
            <person name="Zeng C.Q.-Y."/>
            <person name="Hyser J.M."/>
            <person name="Utama B."/>
            <person name="Crawford S.E."/>
            <person name="Kim K.J."/>
            <person name="Hoeoek M."/>
            <person name="Estes M.K."/>
        </authorList>
    </citation>
    <scope>INTERACTION WITH HUMAN INTEGRIN ITGA1/ITGB1 AND ITGA2/ITGB1 HETERODIMERS</scope>
</reference>
<sequence>MDKLADLNYTLSVITLMNDTLHSIIQDPGMAYFPYIASVLTVLFTLHKASIPTMKIALKTSKCSYKVIKYCMVTIINTLLKLAGYKEQVTTKDEIEQQMDRIIKEMRRQLEMIDKLTTREIEQVELLKRIHDKLAARSVDAIDMSKEFNQKNIRTLDEWESGKNPYEPSEVTASM</sequence>
<organism>
    <name type="scientific">Rotavirus A (strain RVA/Pig/United States/OSU/1977/G5P9[7])</name>
    <name type="common">RV-A</name>
    <name type="synonym">Rotavirus A (strain Ohio State University)</name>
    <dbReference type="NCBI Taxonomy" id="10915"/>
    <lineage>
        <taxon>Viruses</taxon>
        <taxon>Riboviria</taxon>
        <taxon>Orthornavirae</taxon>
        <taxon>Duplornaviricota</taxon>
        <taxon>Resentoviricetes</taxon>
        <taxon>Reovirales</taxon>
        <taxon>Sedoreoviridae</taxon>
        <taxon>Rotavirus</taxon>
        <taxon>Rotavirus A</taxon>
    </lineage>
</organism>
<feature type="chain" id="PRO_0000367823" description="Non-structural glycoprotein 4">
    <location>
        <begin position="1"/>
        <end position="175"/>
    </location>
</feature>
<feature type="topological domain" description="Lumenal" evidence="1">
    <location>
        <begin position="1"/>
        <end position="28"/>
    </location>
</feature>
<feature type="transmembrane region" description="Helical; Signal-anchor for type III membrane protein" evidence="1">
    <location>
        <begin position="29"/>
        <end position="51"/>
    </location>
</feature>
<feature type="topological domain" description="Cytoplasmic" evidence="1">
    <location>
        <begin position="52"/>
        <end position="175"/>
    </location>
</feature>
<feature type="binding site" evidence="1">
    <location>
        <position position="120"/>
    </location>
    <ligand>
        <name>Ca(2+)</name>
        <dbReference type="ChEBI" id="CHEBI:29108"/>
    </ligand>
</feature>
<feature type="binding site" evidence="1">
    <location>
        <position position="123"/>
    </location>
    <ligand>
        <name>Ca(2+)</name>
        <dbReference type="ChEBI" id="CHEBI:29108"/>
    </ligand>
</feature>
<feature type="glycosylation site" description="N-linked (GlcNAc...) asparagine; by host" evidence="1">
    <location>
        <position position="8"/>
    </location>
</feature>
<feature type="glycosylation site" description="N-linked (GlcNAc...) asparagine; by host" evidence="1">
    <location>
        <position position="18"/>
    </location>
</feature>
<proteinExistence type="evidence at protein level"/>
<dbReference type="EMBL" id="D88831">
    <property type="protein sequence ID" value="BAA13728.1"/>
    <property type="molecule type" value="mRNA"/>
</dbReference>
<dbReference type="GO" id="GO:0005576">
    <property type="term" value="C:extracellular region"/>
    <property type="evidence" value="ECO:0007669"/>
    <property type="project" value="UniProtKB-SubCell"/>
</dbReference>
<dbReference type="GO" id="GO:0044155">
    <property type="term" value="C:host caveola"/>
    <property type="evidence" value="ECO:0007669"/>
    <property type="project" value="UniProtKB-SubCell"/>
</dbReference>
<dbReference type="GO" id="GO:0044169">
    <property type="term" value="C:host cell rough endoplasmic reticulum membrane"/>
    <property type="evidence" value="ECO:0007669"/>
    <property type="project" value="UniProtKB-SubCell"/>
</dbReference>
<dbReference type="GO" id="GO:0016020">
    <property type="term" value="C:membrane"/>
    <property type="evidence" value="ECO:0007669"/>
    <property type="project" value="UniProtKB-UniRule"/>
</dbReference>
<dbReference type="GO" id="GO:0015267">
    <property type="term" value="F:channel activity"/>
    <property type="evidence" value="ECO:0007669"/>
    <property type="project" value="UniProtKB-KW"/>
</dbReference>
<dbReference type="GO" id="GO:0046872">
    <property type="term" value="F:metal ion binding"/>
    <property type="evidence" value="ECO:0007669"/>
    <property type="project" value="UniProtKB-UniRule"/>
</dbReference>
<dbReference type="GO" id="GO:0090729">
    <property type="term" value="F:toxin activity"/>
    <property type="evidence" value="ECO:0007669"/>
    <property type="project" value="UniProtKB-UniRule"/>
</dbReference>
<dbReference type="GO" id="GO:0034220">
    <property type="term" value="P:monoatomic ion transmembrane transport"/>
    <property type="evidence" value="ECO:0007669"/>
    <property type="project" value="UniProtKB-KW"/>
</dbReference>
<dbReference type="GO" id="GO:0039520">
    <property type="term" value="P:symbiont-mediated activation of host autophagy"/>
    <property type="evidence" value="ECO:0007669"/>
    <property type="project" value="UniProtKB-KW"/>
</dbReference>
<dbReference type="GO" id="GO:0016032">
    <property type="term" value="P:viral process"/>
    <property type="evidence" value="ECO:0007669"/>
    <property type="project" value="UniProtKB-UniRule"/>
</dbReference>
<dbReference type="Gene3D" id="1.20.5.430">
    <property type="match status" value="1"/>
</dbReference>
<dbReference type="HAMAP" id="MF_04091">
    <property type="entry name" value="ROTA_NSP4"/>
    <property type="match status" value="1"/>
</dbReference>
<dbReference type="InterPro" id="IPR002107">
    <property type="entry name" value="Rotavirus_NSP4"/>
</dbReference>
<dbReference type="Pfam" id="PF01452">
    <property type="entry name" value="Rota_NSP4"/>
    <property type="match status" value="1"/>
</dbReference>
<dbReference type="SUPFAM" id="SSF58030">
    <property type="entry name" value="Rotavirus nonstructural proteins"/>
    <property type="match status" value="1"/>
</dbReference>
<protein>
    <recommendedName>
        <fullName evidence="1">Non-structural glycoprotein 4</fullName>
        <shortName evidence="1">NSP4</shortName>
    </recommendedName>
    <alternativeName>
        <fullName evidence="1">NCVP5</fullName>
    </alternativeName>
    <alternativeName>
        <fullName evidence="1">NS28</fullName>
    </alternativeName>
</protein>
<name>NSP4_ROTP5</name>
<keyword id="KW-1072">Activation of host autophagy by virus</keyword>
<keyword id="KW-0106">Calcium</keyword>
<keyword id="KW-0260">Enterotoxin</keyword>
<keyword id="KW-0325">Glycoprotein</keyword>
<keyword id="KW-1038">Host endoplasmic reticulum</keyword>
<keyword id="KW-1043">Host membrane</keyword>
<keyword id="KW-0945">Host-virus interaction</keyword>
<keyword id="KW-0407">Ion channel</keyword>
<keyword id="KW-0406">Ion transport</keyword>
<keyword id="KW-0472">Membrane</keyword>
<keyword id="KW-0479">Metal-binding</keyword>
<keyword id="KW-0964">Secreted</keyword>
<keyword id="KW-0735">Signal-anchor</keyword>
<keyword id="KW-0800">Toxin</keyword>
<keyword id="KW-0812">Transmembrane</keyword>
<keyword id="KW-1133">Transmembrane helix</keyword>
<keyword id="KW-0813">Transport</keyword>
<keyword id="KW-1182">Viral ion channel</keyword>
<keyword id="KW-0843">Virulence</keyword>
<accession>P89061</accession>